<organism>
    <name type="scientific">Mycobacterium bovis (strain ATCC BAA-935 / AF2122/97)</name>
    <dbReference type="NCBI Taxonomy" id="233413"/>
    <lineage>
        <taxon>Bacteria</taxon>
        <taxon>Bacillati</taxon>
        <taxon>Actinomycetota</taxon>
        <taxon>Actinomycetes</taxon>
        <taxon>Mycobacteriales</taxon>
        <taxon>Mycobacteriaceae</taxon>
        <taxon>Mycobacterium</taxon>
        <taxon>Mycobacterium tuberculosis complex</taxon>
    </lineage>
</organism>
<keyword id="KW-0378">Hydrolase</keyword>
<keyword id="KW-0442">Lipid degradation</keyword>
<keyword id="KW-0443">Lipid metabolism</keyword>
<keyword id="KW-1185">Reference proteome</keyword>
<accession>P67099</accession>
<accession>A0A1R3XX89</accession>
<accession>O53411</accession>
<accession>X2BGK7</accession>
<protein>
    <recommendedName>
        <fullName>Uncharacterized NTE family protein Mb1092c</fullName>
    </recommendedName>
</protein>
<reference key="1">
    <citation type="journal article" date="2003" name="Proc. Natl. Acad. Sci. U.S.A.">
        <title>The complete genome sequence of Mycobacterium bovis.</title>
        <authorList>
            <person name="Garnier T."/>
            <person name="Eiglmeier K."/>
            <person name="Camus J.-C."/>
            <person name="Medina N."/>
            <person name="Mansoor H."/>
            <person name="Pryor M."/>
            <person name="Duthoy S."/>
            <person name="Grondin S."/>
            <person name="Lacroix C."/>
            <person name="Monsempe C."/>
            <person name="Simon S."/>
            <person name="Harris B."/>
            <person name="Atkin R."/>
            <person name="Doggett J."/>
            <person name="Mayes R."/>
            <person name="Keating L."/>
            <person name="Wheeler P.R."/>
            <person name="Parkhill J."/>
            <person name="Barrell B.G."/>
            <person name="Cole S.T."/>
            <person name="Gordon S.V."/>
            <person name="Hewinson R.G."/>
        </authorList>
    </citation>
    <scope>NUCLEOTIDE SEQUENCE [LARGE SCALE GENOMIC DNA]</scope>
    <source>
        <strain>ATCC BAA-935 / AF2122/97</strain>
    </source>
</reference>
<reference key="2">
    <citation type="journal article" date="2017" name="Genome Announc.">
        <title>Updated reference genome sequence and annotation of Mycobacterium bovis AF2122/97.</title>
        <authorList>
            <person name="Malone K.M."/>
            <person name="Farrell D."/>
            <person name="Stuber T.P."/>
            <person name="Schubert O.T."/>
            <person name="Aebersold R."/>
            <person name="Robbe-Austerman S."/>
            <person name="Gordon S.V."/>
        </authorList>
    </citation>
    <scope>NUCLEOTIDE SEQUENCE [LARGE SCALE GENOMIC DNA]</scope>
    <scope>GENOME REANNOTATION</scope>
    <source>
        <strain>ATCC BAA-935 / AF2122/97</strain>
    </source>
</reference>
<gene>
    <name type="ordered locus">BQ2027_MB1092C</name>
</gene>
<sequence length="360" mass="37523">MPAPAALRVRGSSSPRVALALGSGGARGYAHIGVIQALRERGYDIVGIAGSSMGAVVGGVHAAGRLDEFAHWAKSLTQRTILRLLDPSISAAGILRAEKILDAVRDIVGPVAIEQLPIPYTAVATDLLAGKSVWFQRGPLDAAIRASIAIPGVIAPHEVDGRLLADGGILDPLPMAPIAGVNADLTIAVSLNGSEAGPARDAEPNVTAEWLNRMVRSTSALFDVSAARSLLDRPTARAVLSRFGAAAAESDSWSQAPEIEQRPAGPPADREEAADTPGLPKMGSFEVMNRTIDIAQSALARHTLAGYPADLLIEVPRSTCRSLEFHRAVEVIAVGRALATQALEAFEIDDDESAAATIEG</sequence>
<comment type="similarity">
    <text evidence="3">Belongs to the NTE family.</text>
</comment>
<evidence type="ECO:0000255" key="1">
    <source>
        <dbReference type="PROSITE-ProRule" id="PRU01161"/>
    </source>
</evidence>
<evidence type="ECO:0000256" key="2">
    <source>
        <dbReference type="SAM" id="MobiDB-lite"/>
    </source>
</evidence>
<evidence type="ECO:0000305" key="3"/>
<name>Y1092_MYCBO</name>
<proteinExistence type="inferred from homology"/>
<feature type="chain" id="PRO_0000172535" description="Uncharacterized NTE family protein Mb1092c">
    <location>
        <begin position="1"/>
        <end position="360"/>
    </location>
</feature>
<feature type="domain" description="PNPLA" evidence="1">
    <location>
        <begin position="19"/>
        <end position="179"/>
    </location>
</feature>
<feature type="region of interest" description="Disordered" evidence="2">
    <location>
        <begin position="251"/>
        <end position="282"/>
    </location>
</feature>
<feature type="short sequence motif" description="GXSXG" evidence="1">
    <location>
        <begin position="50"/>
        <end position="54"/>
    </location>
</feature>
<feature type="short sequence motif" description="DGA/G" evidence="1">
    <location>
        <begin position="166"/>
        <end position="168"/>
    </location>
</feature>
<feature type="active site" description="Nucleophile" evidence="1">
    <location>
        <position position="52"/>
    </location>
</feature>
<feature type="active site" description="Proton acceptor" evidence="1">
    <location>
        <position position="166"/>
    </location>
</feature>
<dbReference type="EMBL" id="LT708304">
    <property type="protein sequence ID" value="SIT99691.1"/>
    <property type="molecule type" value="Genomic_DNA"/>
</dbReference>
<dbReference type="RefSeq" id="NP_854747.1">
    <property type="nucleotide sequence ID" value="NC_002945.3"/>
</dbReference>
<dbReference type="RefSeq" id="WP_003405642.1">
    <property type="nucleotide sequence ID" value="NC_002945.4"/>
</dbReference>
<dbReference type="SMR" id="P67099"/>
<dbReference type="KEGG" id="mbo:BQ2027_MB1092C"/>
<dbReference type="PATRIC" id="fig|233413.5.peg.1190"/>
<dbReference type="Proteomes" id="UP000001419">
    <property type="component" value="Chromosome"/>
</dbReference>
<dbReference type="GO" id="GO:0004622">
    <property type="term" value="F:lysophospholipase activity"/>
    <property type="evidence" value="ECO:0007669"/>
    <property type="project" value="InterPro"/>
</dbReference>
<dbReference type="GO" id="GO:0016042">
    <property type="term" value="P:lipid catabolic process"/>
    <property type="evidence" value="ECO:0007669"/>
    <property type="project" value="UniProtKB-KW"/>
</dbReference>
<dbReference type="GO" id="GO:0046470">
    <property type="term" value="P:phosphatidylcholine metabolic process"/>
    <property type="evidence" value="ECO:0007669"/>
    <property type="project" value="InterPro"/>
</dbReference>
<dbReference type="CDD" id="cd07228">
    <property type="entry name" value="Pat_NTE_like_bacteria"/>
    <property type="match status" value="1"/>
</dbReference>
<dbReference type="Gene3D" id="3.40.1090.10">
    <property type="entry name" value="Cytosolic phospholipase A2 catalytic domain"/>
    <property type="match status" value="2"/>
</dbReference>
<dbReference type="InterPro" id="IPR016035">
    <property type="entry name" value="Acyl_Trfase/lysoPLipase"/>
</dbReference>
<dbReference type="InterPro" id="IPR001423">
    <property type="entry name" value="LysoPLipase_patatin_CS"/>
</dbReference>
<dbReference type="InterPro" id="IPR050301">
    <property type="entry name" value="NTE"/>
</dbReference>
<dbReference type="InterPro" id="IPR002641">
    <property type="entry name" value="PNPLA_dom"/>
</dbReference>
<dbReference type="PANTHER" id="PTHR14226">
    <property type="entry name" value="NEUROPATHY TARGET ESTERASE/SWISS CHEESE D.MELANOGASTER"/>
    <property type="match status" value="1"/>
</dbReference>
<dbReference type="PANTHER" id="PTHR14226:SF76">
    <property type="entry name" value="NTE FAMILY PROTEIN RSSA"/>
    <property type="match status" value="1"/>
</dbReference>
<dbReference type="Pfam" id="PF01734">
    <property type="entry name" value="Patatin"/>
    <property type="match status" value="1"/>
</dbReference>
<dbReference type="SUPFAM" id="SSF52151">
    <property type="entry name" value="FabD/lysophospholipase-like"/>
    <property type="match status" value="1"/>
</dbReference>
<dbReference type="PROSITE" id="PS51635">
    <property type="entry name" value="PNPLA"/>
    <property type="match status" value="1"/>
</dbReference>
<dbReference type="PROSITE" id="PS01237">
    <property type="entry name" value="UPF0028"/>
    <property type="match status" value="1"/>
</dbReference>